<proteinExistence type="inferred from homology"/>
<feature type="chain" id="PRO_0000251406" description="Ribulose bisphosphate carboxylase">
    <location>
        <begin position="1"/>
        <end position="459"/>
    </location>
</feature>
<feature type="active site" description="Proton acceptor" evidence="1">
    <location>
        <position position="166"/>
    </location>
</feature>
<feature type="active site" description="Proton acceptor" evidence="1">
    <location>
        <position position="287"/>
    </location>
</feature>
<feature type="binding site" description="in homodimeric partner" evidence="1">
    <location>
        <position position="111"/>
    </location>
    <ligand>
        <name>substrate</name>
    </ligand>
</feature>
<feature type="binding site" evidence="1">
    <location>
        <position position="168"/>
    </location>
    <ligand>
        <name>substrate</name>
    </ligand>
</feature>
<feature type="binding site" description="via carbamate group" evidence="1">
    <location>
        <position position="191"/>
    </location>
    <ligand>
        <name>Mg(2+)</name>
        <dbReference type="ChEBI" id="CHEBI:18420"/>
    </ligand>
</feature>
<feature type="binding site" evidence="1">
    <location>
        <position position="193"/>
    </location>
    <ligand>
        <name>Mg(2+)</name>
        <dbReference type="ChEBI" id="CHEBI:18420"/>
    </ligand>
</feature>
<feature type="binding site" evidence="1">
    <location>
        <position position="194"/>
    </location>
    <ligand>
        <name>Mg(2+)</name>
        <dbReference type="ChEBI" id="CHEBI:18420"/>
    </ligand>
</feature>
<feature type="binding site" evidence="1">
    <location>
        <position position="288"/>
    </location>
    <ligand>
        <name>substrate</name>
    </ligand>
</feature>
<feature type="binding site" evidence="1">
    <location>
        <position position="321"/>
    </location>
    <ligand>
        <name>substrate</name>
    </ligand>
</feature>
<feature type="binding site" evidence="1">
    <location>
        <position position="368"/>
    </location>
    <ligand>
        <name>substrate</name>
    </ligand>
</feature>
<feature type="site" description="Transition state stabilizer" evidence="1">
    <location>
        <position position="329"/>
    </location>
</feature>
<feature type="modified residue" description="N6-carboxylysine" evidence="1">
    <location>
        <position position="191"/>
    </location>
</feature>
<gene>
    <name evidence="1" type="primary">cbbM</name>
    <name type="ordered locus">Daro_3637</name>
</gene>
<evidence type="ECO:0000255" key="1">
    <source>
        <dbReference type="HAMAP-Rule" id="MF_01339"/>
    </source>
</evidence>
<dbReference type="EC" id="4.1.1.39" evidence="1"/>
<dbReference type="EMBL" id="CP000089">
    <property type="protein sequence ID" value="AAZ48366.1"/>
    <property type="molecule type" value="Genomic_DNA"/>
</dbReference>
<dbReference type="SMR" id="Q479W5"/>
<dbReference type="STRING" id="159087.Daro_3637"/>
<dbReference type="KEGG" id="dar:Daro_3637"/>
<dbReference type="eggNOG" id="COG1850">
    <property type="taxonomic scope" value="Bacteria"/>
</dbReference>
<dbReference type="HOGENOM" id="CLU_031450_3_1_4"/>
<dbReference type="OrthoDB" id="9770811at2"/>
<dbReference type="GO" id="GO:0000287">
    <property type="term" value="F:magnesium ion binding"/>
    <property type="evidence" value="ECO:0007669"/>
    <property type="project" value="InterPro"/>
</dbReference>
<dbReference type="GO" id="GO:0004497">
    <property type="term" value="F:monooxygenase activity"/>
    <property type="evidence" value="ECO:0007669"/>
    <property type="project" value="UniProtKB-KW"/>
</dbReference>
<dbReference type="GO" id="GO:0016984">
    <property type="term" value="F:ribulose-bisphosphate carboxylase activity"/>
    <property type="evidence" value="ECO:0007669"/>
    <property type="project" value="UniProtKB-EC"/>
</dbReference>
<dbReference type="GO" id="GO:0019253">
    <property type="term" value="P:reductive pentose-phosphate cycle"/>
    <property type="evidence" value="ECO:0007669"/>
    <property type="project" value="UniProtKB-KW"/>
</dbReference>
<dbReference type="CDD" id="cd08211">
    <property type="entry name" value="RuBisCO_large_II"/>
    <property type="match status" value="1"/>
</dbReference>
<dbReference type="Gene3D" id="3.20.20.110">
    <property type="entry name" value="Ribulose bisphosphate carboxylase, large subunit, C-terminal domain"/>
    <property type="match status" value="1"/>
</dbReference>
<dbReference type="Gene3D" id="3.30.70.150">
    <property type="entry name" value="RuBisCO large subunit, N-terminal domain"/>
    <property type="match status" value="1"/>
</dbReference>
<dbReference type="HAMAP" id="MF_01339">
    <property type="entry name" value="RuBisCO_L_type2"/>
    <property type="match status" value="1"/>
</dbReference>
<dbReference type="InterPro" id="IPR033966">
    <property type="entry name" value="RuBisCO"/>
</dbReference>
<dbReference type="InterPro" id="IPR020878">
    <property type="entry name" value="RuBisCo_large_chain_AS"/>
</dbReference>
<dbReference type="InterPro" id="IPR000685">
    <property type="entry name" value="RuBisCO_lsu_C"/>
</dbReference>
<dbReference type="InterPro" id="IPR036376">
    <property type="entry name" value="RuBisCO_lsu_C_sf"/>
</dbReference>
<dbReference type="InterPro" id="IPR017443">
    <property type="entry name" value="RuBisCO_lsu_fd_N"/>
</dbReference>
<dbReference type="InterPro" id="IPR036422">
    <property type="entry name" value="RuBisCO_lsu_N_sf"/>
</dbReference>
<dbReference type="InterPro" id="IPR020871">
    <property type="entry name" value="RuBisCO_lsuII"/>
</dbReference>
<dbReference type="NCBIfam" id="NF010002">
    <property type="entry name" value="PRK13475.1"/>
    <property type="match status" value="1"/>
</dbReference>
<dbReference type="PANTHER" id="PTHR42704">
    <property type="entry name" value="RIBULOSE BISPHOSPHATE CARBOXYLASE"/>
    <property type="match status" value="1"/>
</dbReference>
<dbReference type="PANTHER" id="PTHR42704:SF17">
    <property type="entry name" value="RIBULOSE BISPHOSPHATE CARBOXYLASE LARGE CHAIN"/>
    <property type="match status" value="1"/>
</dbReference>
<dbReference type="Pfam" id="PF00016">
    <property type="entry name" value="RuBisCO_large"/>
    <property type="match status" value="1"/>
</dbReference>
<dbReference type="Pfam" id="PF02788">
    <property type="entry name" value="RuBisCO_large_N"/>
    <property type="match status" value="1"/>
</dbReference>
<dbReference type="SUPFAM" id="SSF51649">
    <property type="entry name" value="RuBisCo, C-terminal domain"/>
    <property type="match status" value="1"/>
</dbReference>
<dbReference type="SUPFAM" id="SSF54966">
    <property type="entry name" value="RuBisCO, large subunit, small (N-terminal) domain"/>
    <property type="match status" value="1"/>
</dbReference>
<dbReference type="PROSITE" id="PS00157">
    <property type="entry name" value="RUBISCO_LARGE"/>
    <property type="match status" value="1"/>
</dbReference>
<accession>Q479W5</accession>
<comment type="function">
    <text evidence="1">RuBisCO catalyzes two reactions: the carboxylation of D-ribulose 1,5-bisphosphate, the primary event in carbon dioxide fixation, as well as the oxidative fragmentation of the pentose substrate. Both reactions occur simultaneously and in competition at the same active site.</text>
</comment>
<comment type="catalytic activity">
    <reaction evidence="1">
        <text>2 (2R)-3-phosphoglycerate + 2 H(+) = D-ribulose 1,5-bisphosphate + CO2 + H2O</text>
        <dbReference type="Rhea" id="RHEA:23124"/>
        <dbReference type="ChEBI" id="CHEBI:15377"/>
        <dbReference type="ChEBI" id="CHEBI:15378"/>
        <dbReference type="ChEBI" id="CHEBI:16526"/>
        <dbReference type="ChEBI" id="CHEBI:57870"/>
        <dbReference type="ChEBI" id="CHEBI:58272"/>
        <dbReference type="EC" id="4.1.1.39"/>
    </reaction>
</comment>
<comment type="catalytic activity">
    <reaction evidence="1">
        <text>D-ribulose 1,5-bisphosphate + O2 = 2-phosphoglycolate + (2R)-3-phosphoglycerate + 2 H(+)</text>
        <dbReference type="Rhea" id="RHEA:36631"/>
        <dbReference type="ChEBI" id="CHEBI:15378"/>
        <dbReference type="ChEBI" id="CHEBI:15379"/>
        <dbReference type="ChEBI" id="CHEBI:57870"/>
        <dbReference type="ChEBI" id="CHEBI:58033"/>
        <dbReference type="ChEBI" id="CHEBI:58272"/>
    </reaction>
</comment>
<comment type="cofactor">
    <cofactor evidence="1">
        <name>Mg(2+)</name>
        <dbReference type="ChEBI" id="CHEBI:18420"/>
    </cofactor>
    <text evidence="1">Binds 1 Mg(2+) ion per subunit.</text>
</comment>
<comment type="subunit">
    <text evidence="1">Homodimer.</text>
</comment>
<comment type="miscellaneous">
    <text evidence="1">The basic functional RuBisCO is composed of a large chain homodimer in a 'head-to-tail' conformation. In contrast to form I RuBisCO, the form II RuBisCO are composed solely of large subunits.</text>
</comment>
<comment type="similarity">
    <text evidence="1">Belongs to the RuBisCO large chain family. Type II subfamily.</text>
</comment>
<keyword id="KW-0113">Calvin cycle</keyword>
<keyword id="KW-0120">Carbon dioxide fixation</keyword>
<keyword id="KW-0456">Lyase</keyword>
<keyword id="KW-0460">Magnesium</keyword>
<keyword id="KW-0479">Metal-binding</keyword>
<keyword id="KW-0503">Monooxygenase</keyword>
<keyword id="KW-0560">Oxidoreductase</keyword>
<protein>
    <recommendedName>
        <fullName evidence="1">Ribulose bisphosphate carboxylase</fullName>
        <shortName evidence="1">RuBisCO</shortName>
        <ecNumber evidence="1">4.1.1.39</ecNumber>
    </recommendedName>
</protein>
<organism>
    <name type="scientific">Dechloromonas aromatica (strain RCB)</name>
    <dbReference type="NCBI Taxonomy" id="159087"/>
    <lineage>
        <taxon>Bacteria</taxon>
        <taxon>Pseudomonadati</taxon>
        <taxon>Pseudomonadota</taxon>
        <taxon>Betaproteobacteria</taxon>
        <taxon>Rhodocyclales</taxon>
        <taxon>Azonexaceae</taxon>
        <taxon>Dechloromonas</taxon>
    </lineage>
</organism>
<reference key="1">
    <citation type="journal article" date="2009" name="BMC Genomics">
        <title>Metabolic analysis of the soil microbe Dechloromonas aromatica str. RCB: indications of a surprisingly complex life-style and cryptic anaerobic pathways for aromatic degradation.</title>
        <authorList>
            <person name="Salinero K.K."/>
            <person name="Keller K."/>
            <person name="Feil W.S."/>
            <person name="Feil H."/>
            <person name="Trong S."/>
            <person name="Di Bartolo G."/>
            <person name="Lapidus A."/>
        </authorList>
    </citation>
    <scope>NUCLEOTIDE SEQUENCE [LARGE SCALE GENOMIC DNA]</scope>
    <source>
        <strain>RCB</strain>
    </source>
</reference>
<sequence length="459" mass="50788">MDQSNRYADLSLTEAELIAGGQHILCAYKMKPKAGHRYLEAAAHFAAESSTGTNVEVCTTDEFTKGVDALVYHIDEASEDMRIAYPLDLFDRNMTDGRMMMASFLTLTIGNNQGMGDIEHAKMVDFYVPRRGIELFDGPSKDISDLWRMLGRPVKDGGYIAGTIIKPKLGLRPEPFARAAYEFWLGGDFIKNDEPQGNQVFAPLKKVIPLVYDSMKRAMDETGEAKLFSMNITADDHFEMCARADFALEAFGPDADKLAFLVDGYVGGPGMITTARRQYPNQYLHYHRAGHGAVTSPSSKRGYTAYVLAKMSRLQGASGIHVGTMGYGKMEGDKDDRACAYIIERDSYTGPVYHQEWYGMKPTTPIISGGMNALRLPGFFENLGHGNVINTAGGGAYGHIDSPAAGARSLRQAYDCWKAGADPVEWARDHYEFARAFESFPQDADQLYPGWRHKLRPAA</sequence>
<name>RBL2_DECAR</name>